<feature type="chain" id="PRO_1000063189" description="1-(5-phosphoribosyl)-5-[(5-phosphoribosylamino)methylideneamino] imidazole-4-carboxamide isomerase">
    <location>
        <begin position="1"/>
        <end position="243"/>
    </location>
</feature>
<feature type="active site" description="Proton acceptor" evidence="1">
    <location>
        <position position="8"/>
    </location>
</feature>
<feature type="active site" description="Proton donor" evidence="1">
    <location>
        <position position="129"/>
    </location>
</feature>
<gene>
    <name evidence="1" type="primary">hisA</name>
    <name type="ordered locus">BOV_2004</name>
</gene>
<organism>
    <name type="scientific">Brucella ovis (strain ATCC 25840 / 63/290 / NCTC 10512)</name>
    <dbReference type="NCBI Taxonomy" id="444178"/>
    <lineage>
        <taxon>Bacteria</taxon>
        <taxon>Pseudomonadati</taxon>
        <taxon>Pseudomonadota</taxon>
        <taxon>Alphaproteobacteria</taxon>
        <taxon>Hyphomicrobiales</taxon>
        <taxon>Brucellaceae</taxon>
        <taxon>Brucella/Ochrobactrum group</taxon>
        <taxon>Brucella</taxon>
    </lineage>
</organism>
<keyword id="KW-0028">Amino-acid biosynthesis</keyword>
<keyword id="KW-0963">Cytoplasm</keyword>
<keyword id="KW-0368">Histidine biosynthesis</keyword>
<keyword id="KW-0413">Isomerase</keyword>
<proteinExistence type="inferred from homology"/>
<sequence length="243" mass="25589">MILFPAIDLKDGQCVRLKLGDMDQATIYNEDPAAQAKAFEDQGFEWLHVVDLNGAFAGESVNGTAVEAILKATKNPVQLGGGIRTLAHIENWLSRGLRRVILGTVAVRDPALVMEACKAFPGQVAVGIDAKGGKVAVEGWAEASRLGVIELAKKFEGAGVAAIIYTDIDRDGVLAGINWDSTLALAEAVSIPVIASGGLASMEDIRRLATPEMRKLEGAISGRALYDGRIDPAEALSVLRAAA</sequence>
<reference key="1">
    <citation type="journal article" date="2009" name="PLoS ONE">
        <title>Genome degradation in Brucella ovis corresponds with narrowing of its host range and tissue tropism.</title>
        <authorList>
            <person name="Tsolis R.M."/>
            <person name="Seshadri R."/>
            <person name="Santos R.L."/>
            <person name="Sangari F.J."/>
            <person name="Lobo J.M."/>
            <person name="de Jong M.F."/>
            <person name="Ren Q."/>
            <person name="Myers G."/>
            <person name="Brinkac L.M."/>
            <person name="Nelson W.C."/>
            <person name="Deboy R.T."/>
            <person name="Angiuoli S."/>
            <person name="Khouri H."/>
            <person name="Dimitrov G."/>
            <person name="Robinson J.R."/>
            <person name="Mulligan S."/>
            <person name="Walker R.L."/>
            <person name="Elzer P.E."/>
            <person name="Hassan K.A."/>
            <person name="Paulsen I.T."/>
        </authorList>
    </citation>
    <scope>NUCLEOTIDE SEQUENCE [LARGE SCALE GENOMIC DNA]</scope>
    <source>
        <strain>ATCC 25840 / 63/290 / NCTC 10512</strain>
    </source>
</reference>
<comment type="catalytic activity">
    <reaction evidence="1">
        <text>1-(5-phospho-beta-D-ribosyl)-5-[(5-phospho-beta-D-ribosylamino)methylideneamino]imidazole-4-carboxamide = 5-[(5-phospho-1-deoxy-D-ribulos-1-ylimino)methylamino]-1-(5-phospho-beta-D-ribosyl)imidazole-4-carboxamide</text>
        <dbReference type="Rhea" id="RHEA:15469"/>
        <dbReference type="ChEBI" id="CHEBI:58435"/>
        <dbReference type="ChEBI" id="CHEBI:58525"/>
        <dbReference type="EC" id="5.3.1.16"/>
    </reaction>
</comment>
<comment type="pathway">
    <text evidence="1">Amino-acid biosynthesis; L-histidine biosynthesis; L-histidine from 5-phospho-alpha-D-ribose 1-diphosphate: step 4/9.</text>
</comment>
<comment type="subcellular location">
    <subcellularLocation>
        <location evidence="1">Cytoplasm</location>
    </subcellularLocation>
</comment>
<comment type="similarity">
    <text evidence="1">Belongs to the HisA/HisF family.</text>
</comment>
<evidence type="ECO:0000255" key="1">
    <source>
        <dbReference type="HAMAP-Rule" id="MF_01014"/>
    </source>
</evidence>
<accession>A5VT42</accession>
<dbReference type="EC" id="5.3.1.16" evidence="1"/>
<dbReference type="EMBL" id="CP000708">
    <property type="protein sequence ID" value="ABQ61933.1"/>
    <property type="molecule type" value="Genomic_DNA"/>
</dbReference>
<dbReference type="RefSeq" id="WP_002965150.1">
    <property type="nucleotide sequence ID" value="NC_009505.1"/>
</dbReference>
<dbReference type="SMR" id="A5VT42"/>
<dbReference type="GeneID" id="97534653"/>
<dbReference type="KEGG" id="bov:BOV_2004"/>
<dbReference type="HOGENOM" id="CLU_048577_1_1_5"/>
<dbReference type="PhylomeDB" id="A5VT42"/>
<dbReference type="UniPathway" id="UPA00031">
    <property type="reaction ID" value="UER00009"/>
</dbReference>
<dbReference type="Proteomes" id="UP000006383">
    <property type="component" value="Chromosome I"/>
</dbReference>
<dbReference type="GO" id="GO:0005737">
    <property type="term" value="C:cytoplasm"/>
    <property type="evidence" value="ECO:0007669"/>
    <property type="project" value="UniProtKB-SubCell"/>
</dbReference>
<dbReference type="GO" id="GO:0003949">
    <property type="term" value="F:1-(5-phosphoribosyl)-5-[(5-phosphoribosylamino)methylideneamino]imidazole-4-carboxamide isomerase activity"/>
    <property type="evidence" value="ECO:0007669"/>
    <property type="project" value="UniProtKB-UniRule"/>
</dbReference>
<dbReference type="GO" id="GO:0000105">
    <property type="term" value="P:L-histidine biosynthetic process"/>
    <property type="evidence" value="ECO:0007669"/>
    <property type="project" value="UniProtKB-UniRule"/>
</dbReference>
<dbReference type="GO" id="GO:0000162">
    <property type="term" value="P:L-tryptophan biosynthetic process"/>
    <property type="evidence" value="ECO:0007669"/>
    <property type="project" value="TreeGrafter"/>
</dbReference>
<dbReference type="CDD" id="cd04732">
    <property type="entry name" value="HisA"/>
    <property type="match status" value="1"/>
</dbReference>
<dbReference type="FunFam" id="3.20.20.70:FF:000009">
    <property type="entry name" value="1-(5-phosphoribosyl)-5-[(5-phosphoribosylamino)methylideneamino] imidazole-4-carboxamide isomerase"/>
    <property type="match status" value="1"/>
</dbReference>
<dbReference type="Gene3D" id="3.20.20.70">
    <property type="entry name" value="Aldolase class I"/>
    <property type="match status" value="1"/>
</dbReference>
<dbReference type="HAMAP" id="MF_01014">
    <property type="entry name" value="HisA"/>
    <property type="match status" value="1"/>
</dbReference>
<dbReference type="InterPro" id="IPR013785">
    <property type="entry name" value="Aldolase_TIM"/>
</dbReference>
<dbReference type="InterPro" id="IPR006062">
    <property type="entry name" value="His_biosynth"/>
</dbReference>
<dbReference type="InterPro" id="IPR006063">
    <property type="entry name" value="HisA_bact_arch"/>
</dbReference>
<dbReference type="InterPro" id="IPR044524">
    <property type="entry name" value="Isoase_HisA-like"/>
</dbReference>
<dbReference type="InterPro" id="IPR023016">
    <property type="entry name" value="Isoase_HisA-like_bact"/>
</dbReference>
<dbReference type="InterPro" id="IPR011060">
    <property type="entry name" value="RibuloseP-bd_barrel"/>
</dbReference>
<dbReference type="NCBIfam" id="TIGR00007">
    <property type="entry name" value="1-(5-phosphoribosyl)-5-[(5-phosphoribosylamino)methylideneamino]imidazole-4-carboxamide isomerase"/>
    <property type="match status" value="1"/>
</dbReference>
<dbReference type="PANTHER" id="PTHR43090">
    <property type="entry name" value="1-(5-PHOSPHORIBOSYL)-5-[(5-PHOSPHORIBOSYLAMINO)METHYLIDENEAMINO] IMIDAZOLE-4-CARBOXAMIDE ISOMERASE"/>
    <property type="match status" value="1"/>
</dbReference>
<dbReference type="PANTHER" id="PTHR43090:SF2">
    <property type="entry name" value="1-(5-PHOSPHORIBOSYL)-5-[(5-PHOSPHORIBOSYLAMINO)METHYLIDENEAMINO] IMIDAZOLE-4-CARBOXAMIDE ISOMERASE"/>
    <property type="match status" value="1"/>
</dbReference>
<dbReference type="Pfam" id="PF00977">
    <property type="entry name" value="His_biosynth"/>
    <property type="match status" value="1"/>
</dbReference>
<dbReference type="SUPFAM" id="SSF51366">
    <property type="entry name" value="Ribulose-phoshate binding barrel"/>
    <property type="match status" value="1"/>
</dbReference>
<name>HIS4_BRUO2</name>
<protein>
    <recommendedName>
        <fullName evidence="1">1-(5-phosphoribosyl)-5-[(5-phosphoribosylamino)methylideneamino] imidazole-4-carboxamide isomerase</fullName>
        <ecNumber evidence="1">5.3.1.16</ecNumber>
    </recommendedName>
    <alternativeName>
        <fullName evidence="1">Phosphoribosylformimino-5-aminoimidazole carboxamide ribotide isomerase</fullName>
    </alternativeName>
</protein>